<evidence type="ECO:0000255" key="1">
    <source>
        <dbReference type="HAMAP-Rule" id="MF_01063"/>
    </source>
</evidence>
<feature type="chain" id="PRO_0000197152" description="Esterase FrsA">
    <location>
        <begin position="1"/>
        <end position="414"/>
    </location>
</feature>
<gene>
    <name evidence="1" type="primary">frsA</name>
    <name type="ordered locus">c0386</name>
</gene>
<name>FRSA_ECOL6</name>
<comment type="function">
    <text evidence="1">Catalyzes the hydrolysis of esters.</text>
</comment>
<comment type="catalytic activity">
    <reaction evidence="1">
        <text>a carboxylic ester + H2O = an alcohol + a carboxylate + H(+)</text>
        <dbReference type="Rhea" id="RHEA:21164"/>
        <dbReference type="ChEBI" id="CHEBI:15377"/>
        <dbReference type="ChEBI" id="CHEBI:15378"/>
        <dbReference type="ChEBI" id="CHEBI:29067"/>
        <dbReference type="ChEBI" id="CHEBI:30879"/>
        <dbReference type="ChEBI" id="CHEBI:33308"/>
        <dbReference type="EC" id="3.1.1.1"/>
    </reaction>
</comment>
<comment type="similarity">
    <text evidence="1">Belongs to the FrsA family.</text>
</comment>
<proteinExistence type="inferred from homology"/>
<organism>
    <name type="scientific">Escherichia coli O6:H1 (strain CFT073 / ATCC 700928 / UPEC)</name>
    <dbReference type="NCBI Taxonomy" id="199310"/>
    <lineage>
        <taxon>Bacteria</taxon>
        <taxon>Pseudomonadati</taxon>
        <taxon>Pseudomonadota</taxon>
        <taxon>Gammaproteobacteria</taxon>
        <taxon>Enterobacterales</taxon>
        <taxon>Enterobacteriaceae</taxon>
        <taxon>Escherichia</taxon>
    </lineage>
</organism>
<reference key="1">
    <citation type="journal article" date="2002" name="Proc. Natl. Acad. Sci. U.S.A.">
        <title>Extensive mosaic structure revealed by the complete genome sequence of uropathogenic Escherichia coli.</title>
        <authorList>
            <person name="Welch R.A."/>
            <person name="Burland V."/>
            <person name="Plunkett G. III"/>
            <person name="Redford P."/>
            <person name="Roesch P."/>
            <person name="Rasko D."/>
            <person name="Buckles E.L."/>
            <person name="Liou S.-R."/>
            <person name="Boutin A."/>
            <person name="Hackett J."/>
            <person name="Stroud D."/>
            <person name="Mayhew G.F."/>
            <person name="Rose D.J."/>
            <person name="Zhou S."/>
            <person name="Schwartz D.C."/>
            <person name="Perna N.T."/>
            <person name="Mobley H.L.T."/>
            <person name="Donnenberg M.S."/>
            <person name="Blattner F.R."/>
        </authorList>
    </citation>
    <scope>NUCLEOTIDE SEQUENCE [LARGE SCALE GENOMIC DNA]</scope>
    <source>
        <strain>CFT073 / ATCC 700928 / UPEC</strain>
    </source>
</reference>
<sequence>MTQANLSETLFKPRFKHPETSTLVRRFSHGAQPPVQSALDGKTIPHWYRMINRLMWIWRGIDPREILDVQARIVMSDAERTDDDLYDTVIGYRGGNWIYEWATQAMVWQQKACAEEDPQLSGRHWLHAATLYNIAAYPHLKGDDLAEQAQALSNRAYEEAAQRLPGTMRQMEFTVPGGAPITGFLHMPKGDGPFPTVLMCGGLDAMQTDYYSLYERYFAPRGIAMLTIDMPSVGFSSKWKLTQDSSLLHQHVLKALPNVPWVDHTRVAAFGFRFGANVAVRLAYLESPRLKVVACLGPVVHTLLSDFKCQQQVPEMYLDVLASRLGMHDASDEALRVELNRYSLKVQGLLGRRCPTPMLSGYWKNDPFSPEEDSRLITSSSADGKLLEIPFNPVYRNFDKGLQEITDWIEKRLC</sequence>
<keyword id="KW-0378">Hydrolase</keyword>
<keyword id="KW-1185">Reference proteome</keyword>
<keyword id="KW-0719">Serine esterase</keyword>
<protein>
    <recommendedName>
        <fullName evidence="1">Esterase FrsA</fullName>
        <ecNumber evidence="1">3.1.1.1</ecNumber>
    </recommendedName>
</protein>
<dbReference type="EC" id="3.1.1.1" evidence="1"/>
<dbReference type="EMBL" id="AE014075">
    <property type="protein sequence ID" value="AAN78867.1"/>
    <property type="molecule type" value="Genomic_DNA"/>
</dbReference>
<dbReference type="RefSeq" id="WP_000189578.1">
    <property type="nucleotide sequence ID" value="NZ_CP051263.1"/>
</dbReference>
<dbReference type="SMR" id="Q8FKM5"/>
<dbReference type="STRING" id="199310.c0386"/>
<dbReference type="ESTHER" id="ecoli-yafa">
    <property type="family name" value="Duf_1100-R"/>
</dbReference>
<dbReference type="KEGG" id="ecc:c0386"/>
<dbReference type="eggNOG" id="COG1073">
    <property type="taxonomic scope" value="Bacteria"/>
</dbReference>
<dbReference type="HOGENOM" id="CLU_036819_0_0_6"/>
<dbReference type="BioCyc" id="ECOL199310:C0386-MONOMER"/>
<dbReference type="Proteomes" id="UP000001410">
    <property type="component" value="Chromosome"/>
</dbReference>
<dbReference type="GO" id="GO:0106435">
    <property type="term" value="F:carboxylesterase activity"/>
    <property type="evidence" value="ECO:0007669"/>
    <property type="project" value="UniProtKB-EC"/>
</dbReference>
<dbReference type="FunFam" id="3.40.50.1820:FF:000022">
    <property type="entry name" value="Esterase FrsA"/>
    <property type="match status" value="1"/>
</dbReference>
<dbReference type="Gene3D" id="3.40.50.1820">
    <property type="entry name" value="alpha/beta hydrolase"/>
    <property type="match status" value="1"/>
</dbReference>
<dbReference type="HAMAP" id="MF_01063">
    <property type="entry name" value="FrsA"/>
    <property type="match status" value="1"/>
</dbReference>
<dbReference type="InterPro" id="IPR029058">
    <property type="entry name" value="AB_hydrolase_fold"/>
</dbReference>
<dbReference type="InterPro" id="IPR043423">
    <property type="entry name" value="FrsA"/>
</dbReference>
<dbReference type="InterPro" id="IPR010520">
    <property type="entry name" value="FrsA-like"/>
</dbReference>
<dbReference type="InterPro" id="IPR050261">
    <property type="entry name" value="FrsA_esterase"/>
</dbReference>
<dbReference type="NCBIfam" id="NF003460">
    <property type="entry name" value="PRK05077.1"/>
    <property type="match status" value="1"/>
</dbReference>
<dbReference type="PANTHER" id="PTHR22946">
    <property type="entry name" value="DIENELACTONE HYDROLASE DOMAIN-CONTAINING PROTEIN-RELATED"/>
    <property type="match status" value="1"/>
</dbReference>
<dbReference type="PANTHER" id="PTHR22946:SF4">
    <property type="entry name" value="ESTERASE FRSA"/>
    <property type="match status" value="1"/>
</dbReference>
<dbReference type="Pfam" id="PF06500">
    <property type="entry name" value="FrsA-like"/>
    <property type="match status" value="1"/>
</dbReference>
<dbReference type="SUPFAM" id="SSF53474">
    <property type="entry name" value="alpha/beta-Hydrolases"/>
    <property type="match status" value="1"/>
</dbReference>
<accession>Q8FKM5</accession>